<accession>B3EC54</accession>
<organism>
    <name type="scientific">Chlorobium limicola (strain DSM 245 / NBRC 103803 / 6330)</name>
    <dbReference type="NCBI Taxonomy" id="290315"/>
    <lineage>
        <taxon>Bacteria</taxon>
        <taxon>Pseudomonadati</taxon>
        <taxon>Chlorobiota</taxon>
        <taxon>Chlorobiia</taxon>
        <taxon>Chlorobiales</taxon>
        <taxon>Chlorobiaceae</taxon>
        <taxon>Chlorobium/Pelodictyon group</taxon>
        <taxon>Chlorobium</taxon>
    </lineage>
</organism>
<reference key="1">
    <citation type="submission" date="2008-05" db="EMBL/GenBank/DDBJ databases">
        <title>Complete sequence of Chlorobium limicola DSM 245.</title>
        <authorList>
            <consortium name="US DOE Joint Genome Institute"/>
            <person name="Lucas S."/>
            <person name="Copeland A."/>
            <person name="Lapidus A."/>
            <person name="Glavina del Rio T."/>
            <person name="Dalin E."/>
            <person name="Tice H."/>
            <person name="Bruce D."/>
            <person name="Goodwin L."/>
            <person name="Pitluck S."/>
            <person name="Schmutz J."/>
            <person name="Larimer F."/>
            <person name="Land M."/>
            <person name="Hauser L."/>
            <person name="Kyrpides N."/>
            <person name="Ovchinnikova G."/>
            <person name="Zhao F."/>
            <person name="Li T."/>
            <person name="Liu Z."/>
            <person name="Overmann J."/>
            <person name="Bryant D.A."/>
            <person name="Richardson P."/>
        </authorList>
    </citation>
    <scope>NUCLEOTIDE SEQUENCE [LARGE SCALE GENOMIC DNA]</scope>
    <source>
        <strain>DSM 245 / NBRC 103803 / 6330</strain>
    </source>
</reference>
<gene>
    <name evidence="1" type="primary">cbiM</name>
    <name type="ordered locus">Clim_1060</name>
</gene>
<evidence type="ECO:0000255" key="1">
    <source>
        <dbReference type="HAMAP-Rule" id="MF_01462"/>
    </source>
</evidence>
<feature type="signal peptide" evidence="1">
    <location>
        <begin position="1"/>
        <end position="31"/>
    </location>
</feature>
<feature type="chain" id="PRO_5000374757" description="Cobalt transport protein CbiM">
    <location>
        <begin position="32"/>
        <end position="254"/>
    </location>
</feature>
<feature type="transmembrane region" description="Helical" evidence="1">
    <location>
        <begin position="37"/>
        <end position="57"/>
    </location>
</feature>
<feature type="transmembrane region" description="Helical" evidence="1">
    <location>
        <begin position="74"/>
        <end position="94"/>
    </location>
</feature>
<feature type="transmembrane region" description="Helical" evidence="1">
    <location>
        <begin position="106"/>
        <end position="126"/>
    </location>
</feature>
<feature type="transmembrane region" description="Helical" evidence="1">
    <location>
        <begin position="128"/>
        <end position="148"/>
    </location>
</feature>
<feature type="transmembrane region" description="Helical" evidence="1">
    <location>
        <begin position="169"/>
        <end position="189"/>
    </location>
</feature>
<feature type="transmembrane region" description="Helical" evidence="1">
    <location>
        <begin position="212"/>
        <end position="232"/>
    </location>
</feature>
<name>CBIM_CHLL2</name>
<protein>
    <recommendedName>
        <fullName evidence="1">Cobalt transport protein CbiM</fullName>
    </recommendedName>
    <alternativeName>
        <fullName evidence="1">Energy-coupling factor transporter probable substrate-capture protein CbiM</fullName>
        <shortName evidence="1">ECF transporter S component CbiM</shortName>
    </alternativeName>
</protein>
<sequence>MKTILRPFTLLSRSIFLALFVLFLWSPDAHAMHIMEGFLPPSWSLFWWVLTLPFLVVGFRSLRKIVDANPRMKLLLAMAGAFAFVLSSLKIPSVTGSCSHPTGVGLGAVLFGPSVMSVLGVIVLLFQALLLAHGGLTTLGANAFSMAIAGPFVSYGIYRLMVMSKAPEWLAVFLAAAIGDLMTYVVTSLQLALAFPSVTGGIAASLGKFMTIFALTQVPLAISEGILTVMVFSAIREYASELFPASGTLAKEGV</sequence>
<dbReference type="EMBL" id="CP001097">
    <property type="protein sequence ID" value="ACD90129.1"/>
    <property type="molecule type" value="Genomic_DNA"/>
</dbReference>
<dbReference type="RefSeq" id="WP_012466006.1">
    <property type="nucleotide sequence ID" value="NC_010803.1"/>
</dbReference>
<dbReference type="SMR" id="B3EC54"/>
<dbReference type="STRING" id="290315.Clim_1060"/>
<dbReference type="KEGG" id="cli:Clim_1060"/>
<dbReference type="eggNOG" id="COG0310">
    <property type="taxonomic scope" value="Bacteria"/>
</dbReference>
<dbReference type="HOGENOM" id="CLU_052508_3_0_10"/>
<dbReference type="UniPathway" id="UPA00148"/>
<dbReference type="Proteomes" id="UP000008841">
    <property type="component" value="Chromosome"/>
</dbReference>
<dbReference type="GO" id="GO:0043190">
    <property type="term" value="C:ATP-binding cassette (ABC) transporter complex"/>
    <property type="evidence" value="ECO:0007669"/>
    <property type="project" value="InterPro"/>
</dbReference>
<dbReference type="GO" id="GO:0015087">
    <property type="term" value="F:cobalt ion transmembrane transporter activity"/>
    <property type="evidence" value="ECO:0007669"/>
    <property type="project" value="UniProtKB-UniRule"/>
</dbReference>
<dbReference type="GO" id="GO:0009236">
    <property type="term" value="P:cobalamin biosynthetic process"/>
    <property type="evidence" value="ECO:0007669"/>
    <property type="project" value="UniProtKB-UniRule"/>
</dbReference>
<dbReference type="FunFam" id="1.10.1760.20:FF:000001">
    <property type="entry name" value="Cobalt transport protein CbiM"/>
    <property type="match status" value="1"/>
</dbReference>
<dbReference type="Gene3D" id="1.10.1760.20">
    <property type="match status" value="1"/>
</dbReference>
<dbReference type="HAMAP" id="MF_01462">
    <property type="entry name" value="CbiM"/>
    <property type="match status" value="1"/>
</dbReference>
<dbReference type="InterPro" id="IPR018024">
    <property type="entry name" value="CbiM"/>
</dbReference>
<dbReference type="InterPro" id="IPR002751">
    <property type="entry name" value="CbiM/NikMN"/>
</dbReference>
<dbReference type="NCBIfam" id="TIGR00123">
    <property type="entry name" value="cbiM"/>
    <property type="match status" value="1"/>
</dbReference>
<dbReference type="NCBIfam" id="NF006184">
    <property type="entry name" value="PRK08319.1"/>
    <property type="match status" value="1"/>
</dbReference>
<dbReference type="PANTHER" id="PTHR43627">
    <property type="match status" value="1"/>
</dbReference>
<dbReference type="PANTHER" id="PTHR43627:SF1">
    <property type="entry name" value="COBALT TRANSPORT PROTEIN CBIM"/>
    <property type="match status" value="1"/>
</dbReference>
<dbReference type="Pfam" id="PF01891">
    <property type="entry name" value="CbiM"/>
    <property type="match status" value="1"/>
</dbReference>
<comment type="function">
    <text evidence="1">Part of the energy-coupling factor (ECF) transporter complex CbiMNOQ involved in cobalt import.</text>
</comment>
<comment type="pathway">
    <text evidence="1">Cofactor biosynthesis; adenosylcobalamin biosynthesis.</text>
</comment>
<comment type="subunit">
    <text evidence="1">Forms an energy-coupling factor (ECF) transporter complex composed of an ATP-binding protein (A component, CbiO), a transmembrane protein (T component, CbiQ) and 2 possible substrate-capture proteins (S components, CbiM and CbiN) of unknown stoichimetry.</text>
</comment>
<comment type="subcellular location">
    <subcellularLocation>
        <location evidence="1">Cell inner membrane</location>
        <topology evidence="1">Multi-pass membrane protein</topology>
    </subcellularLocation>
</comment>
<comment type="similarity">
    <text evidence="1">Belongs to the CbiM family.</text>
</comment>
<keyword id="KW-0997">Cell inner membrane</keyword>
<keyword id="KW-1003">Cell membrane</keyword>
<keyword id="KW-0169">Cobalamin biosynthesis</keyword>
<keyword id="KW-0170">Cobalt</keyword>
<keyword id="KW-0171">Cobalt transport</keyword>
<keyword id="KW-0406">Ion transport</keyword>
<keyword id="KW-0472">Membrane</keyword>
<keyword id="KW-0732">Signal</keyword>
<keyword id="KW-0812">Transmembrane</keyword>
<keyword id="KW-1133">Transmembrane helix</keyword>
<keyword id="KW-0813">Transport</keyword>
<proteinExistence type="inferred from homology"/>